<keyword id="KW-0965">Cell junction</keyword>
<keyword id="KW-1003">Cell membrane</keyword>
<keyword id="KW-0225">Disease variant</keyword>
<keyword id="KW-1015">Disulfide bond</keyword>
<keyword id="KW-0303">Gap junction</keyword>
<keyword id="KW-0472">Membrane</keyword>
<keyword id="KW-1185">Reference proteome</keyword>
<keyword id="KW-0812">Transmembrane</keyword>
<keyword id="KW-1133">Transmembrane helix</keyword>
<reference key="1">
    <citation type="journal article" date="2002" name="Invest. Ophthalmol. Vis. Sci.">
        <title>Mapping of a gene responsible for cataract formation and its modifier in the UPL rat.</title>
        <authorList>
            <person name="Yamashita S."/>
            <person name="Furumoto K."/>
            <person name="Nobukiyo A."/>
            <person name="Kamohara M."/>
            <person name="Ushijima T."/>
            <person name="Furukawa T."/>
        </authorList>
    </citation>
    <scope>NUCLEOTIDE SEQUENCE [GENOMIC DNA]</scope>
    <scope>VARIANT CATARACT TRP-340</scope>
    <source>
        <strain>Brown Norway</strain>
        <tissue>Liver</tissue>
    </source>
</reference>
<reference key="2">
    <citation type="journal article" date="1992" name="Mol. Biol. Cell">
        <title>Mouse Cx50, a functional member of the connexin family of gap junction proteins, is the lens fiber protein MP70.</title>
        <authorList>
            <person name="White T.W."/>
            <person name="Bruzzone R."/>
            <person name="Goodenough D.A."/>
            <person name="Paul D.L."/>
        </authorList>
    </citation>
    <scope>TISSUE SPECIFICITY</scope>
</reference>
<sequence>MGDWSFLGNILEEVNEHSTVIGRVWLTVLFIFRILILGTAAEFVWGDEQSDFVCNTQQPGCENVCYDEAFPISHIRLWVLQIIFVSTPSLMYVGHAVHHVRMEEKRKDREAEELCQQSRSNGGERVPIAPDQASIRKSSSSSKGTKKFRLEGTLLRTYVCHIIFKTLFEVGFIVGHYFLYGFRILPLYRCSRWPCPNVVDCFVSRPTEKTIFILFMLSVAFVSLFLNIMEMSHLGMKGIRSAFKRPAEQPLGEIAEKSLHSIAVSSIQKAKGYQLLEEEKIVSHYFPLTEVGMVETSPLSAKPFSQFEEKIGTGPLADMSRGYQETLPSYAQVGAQEVEREEQPVEEAVEPEVGEKKQEAEKVAPEGQETVAVPDGEKVETPGVGKDDEKEELQAEKVTKQGLSAEKAPTLCPELTTDDNRPLSRLSKASSRARSDDLTI</sequence>
<name>CXA8_RAT</name>
<organism>
    <name type="scientific">Rattus norvegicus</name>
    <name type="common">Rat</name>
    <dbReference type="NCBI Taxonomy" id="10116"/>
    <lineage>
        <taxon>Eukaryota</taxon>
        <taxon>Metazoa</taxon>
        <taxon>Chordata</taxon>
        <taxon>Craniata</taxon>
        <taxon>Vertebrata</taxon>
        <taxon>Euteleostomi</taxon>
        <taxon>Mammalia</taxon>
        <taxon>Eutheria</taxon>
        <taxon>Euarchontoglires</taxon>
        <taxon>Glires</taxon>
        <taxon>Rodentia</taxon>
        <taxon>Myomorpha</taxon>
        <taxon>Muroidea</taxon>
        <taxon>Muridae</taxon>
        <taxon>Murinae</taxon>
        <taxon>Rattus</taxon>
    </lineage>
</organism>
<evidence type="ECO:0000250" key="1">
    <source>
        <dbReference type="UniProtKB" id="P55917"/>
    </source>
</evidence>
<evidence type="ECO:0000256" key="2">
    <source>
        <dbReference type="SAM" id="MobiDB-lite"/>
    </source>
</evidence>
<evidence type="ECO:0000269" key="3">
    <source>
    </source>
</evidence>
<evidence type="ECO:0000269" key="4">
    <source>
    </source>
</evidence>
<evidence type="ECO:0000305" key="5"/>
<protein>
    <recommendedName>
        <fullName>Gap junction alpha-8 protein</fullName>
    </recommendedName>
    <alternativeName>
        <fullName>Connexin-50</fullName>
        <shortName>Cx50</shortName>
    </alternativeName>
</protein>
<proteinExistence type="evidence at protein level"/>
<gene>
    <name type="primary">Gja8</name>
</gene>
<accession>Q8K4Q9</accession>
<feature type="initiator methionine" description="Removed" evidence="1">
    <location>
        <position position="1"/>
    </location>
</feature>
<feature type="chain" id="PRO_0000313005" description="Gap junction alpha-8 protein">
    <location>
        <begin position="2"/>
        <end position="440"/>
    </location>
</feature>
<feature type="intramembrane region" evidence="1">
    <location>
        <begin position="2"/>
        <end position="12"/>
    </location>
</feature>
<feature type="topological domain" description="Cytoplasmic" evidence="5">
    <location>
        <begin position="13"/>
        <end position="21"/>
    </location>
</feature>
<feature type="transmembrane region" description="Helical" evidence="1">
    <location>
        <begin position="22"/>
        <end position="42"/>
    </location>
</feature>
<feature type="topological domain" description="Extracellular" evidence="5">
    <location>
        <begin position="43"/>
        <end position="71"/>
    </location>
</feature>
<feature type="transmembrane region" description="Helical" evidence="1">
    <location>
        <begin position="72"/>
        <end position="92"/>
    </location>
</feature>
<feature type="topological domain" description="Cytoplasmic" evidence="5">
    <location>
        <begin position="93"/>
        <end position="161"/>
    </location>
</feature>
<feature type="transmembrane region" description="Helical" evidence="1">
    <location>
        <begin position="162"/>
        <end position="182"/>
    </location>
</feature>
<feature type="topological domain" description="Extracellular" evidence="5">
    <location>
        <begin position="183"/>
        <end position="210"/>
    </location>
</feature>
<feature type="transmembrane region" description="Helical" evidence="1">
    <location>
        <begin position="211"/>
        <end position="231"/>
    </location>
</feature>
<feature type="topological domain" description="Cytoplasmic" evidence="5">
    <location>
        <begin position="232"/>
        <end position="440"/>
    </location>
</feature>
<feature type="region of interest" description="Disordered" evidence="2">
    <location>
        <begin position="111"/>
        <end position="143"/>
    </location>
</feature>
<feature type="region of interest" description="Disordered" evidence="2">
    <location>
        <begin position="334"/>
        <end position="440"/>
    </location>
</feature>
<feature type="compositionally biased region" description="Basic and acidic residues" evidence="2">
    <location>
        <begin position="353"/>
        <end position="364"/>
    </location>
</feature>
<feature type="compositionally biased region" description="Basic and acidic residues" evidence="2">
    <location>
        <begin position="375"/>
        <end position="399"/>
    </location>
</feature>
<feature type="compositionally biased region" description="Low complexity" evidence="2">
    <location>
        <begin position="423"/>
        <end position="432"/>
    </location>
</feature>
<feature type="disulfide bond" evidence="1">
    <location>
        <begin position="54"/>
        <end position="201"/>
    </location>
</feature>
<feature type="disulfide bond" evidence="1">
    <location>
        <begin position="61"/>
        <end position="195"/>
    </location>
</feature>
<feature type="disulfide bond" evidence="1">
    <location>
        <begin position="65"/>
        <end position="190"/>
    </location>
</feature>
<feature type="sequence variant" description="In cataract." evidence="3">
    <original>R</original>
    <variation>W</variation>
    <location>
        <position position="340"/>
    </location>
</feature>
<dbReference type="EMBL" id="AB078344">
    <property type="protein sequence ID" value="BAC06574.1"/>
    <property type="molecule type" value="Genomic_DNA"/>
</dbReference>
<dbReference type="SMR" id="Q8K4Q9"/>
<dbReference type="FunCoup" id="Q8K4Q9">
    <property type="interactions" value="76"/>
</dbReference>
<dbReference type="STRING" id="10116.ENSRNOP00000066975"/>
<dbReference type="PhosphoSitePlus" id="Q8K4Q9"/>
<dbReference type="PaxDb" id="10116-ENSRNOP00000066975"/>
<dbReference type="Ensembl" id="ENSRNOT00000071622.3">
    <property type="protein sequence ID" value="ENSRNOP00000066975.1"/>
    <property type="gene ID" value="ENSRNOG00000046703.3"/>
</dbReference>
<dbReference type="AGR" id="RGD:628890"/>
<dbReference type="RGD" id="628890">
    <property type="gene designation" value="Gja8"/>
</dbReference>
<dbReference type="eggNOG" id="ENOG502QV1K">
    <property type="taxonomic scope" value="Eukaryota"/>
</dbReference>
<dbReference type="GeneTree" id="ENSGT01050000244864"/>
<dbReference type="HOGENOM" id="CLU_037388_0_0_1"/>
<dbReference type="InParanoid" id="Q8K4Q9"/>
<dbReference type="OMA" id="EKPVSHY"/>
<dbReference type="OrthoDB" id="9941830at2759"/>
<dbReference type="PhylomeDB" id="Q8K4Q9"/>
<dbReference type="Reactome" id="R-RNO-190861">
    <property type="pathway name" value="Gap junction assembly"/>
</dbReference>
<dbReference type="PRO" id="PR:Q8K4Q9"/>
<dbReference type="Proteomes" id="UP000002494">
    <property type="component" value="Chromosome 2"/>
</dbReference>
<dbReference type="Bgee" id="ENSRNOG00000046703">
    <property type="expression patterns" value="Expressed in testis"/>
</dbReference>
<dbReference type="ExpressionAtlas" id="Q8K4Q9">
    <property type="expression patterns" value="differential"/>
</dbReference>
<dbReference type="GO" id="GO:0005922">
    <property type="term" value="C:connexin complex"/>
    <property type="evidence" value="ECO:0000314"/>
    <property type="project" value="RGD"/>
</dbReference>
<dbReference type="GO" id="GO:0005886">
    <property type="term" value="C:plasma membrane"/>
    <property type="evidence" value="ECO:0000250"/>
    <property type="project" value="UniProtKB"/>
</dbReference>
<dbReference type="GO" id="GO:0005243">
    <property type="term" value="F:gap junction channel activity"/>
    <property type="evidence" value="ECO:0000266"/>
    <property type="project" value="RGD"/>
</dbReference>
<dbReference type="GO" id="GO:0042802">
    <property type="term" value="F:identical protein binding"/>
    <property type="evidence" value="ECO:0000353"/>
    <property type="project" value="RGD"/>
</dbReference>
<dbReference type="GO" id="GO:0043010">
    <property type="term" value="P:camera-type eye development"/>
    <property type="evidence" value="ECO:0000266"/>
    <property type="project" value="RGD"/>
</dbReference>
<dbReference type="GO" id="GO:0007267">
    <property type="term" value="P:cell-cell signaling"/>
    <property type="evidence" value="ECO:0000314"/>
    <property type="project" value="RGD"/>
</dbReference>
<dbReference type="GO" id="GO:1990349">
    <property type="term" value="P:gap junction-mediated intercellular transport"/>
    <property type="evidence" value="ECO:0000250"/>
    <property type="project" value="UniProtKB"/>
</dbReference>
<dbReference type="GO" id="GO:0002088">
    <property type="term" value="P:lens development in camera-type eye"/>
    <property type="evidence" value="ECO:0000266"/>
    <property type="project" value="RGD"/>
</dbReference>
<dbReference type="GO" id="GO:0032645">
    <property type="term" value="P:regulation of granulocyte macrophage colony-stimulating factor production"/>
    <property type="evidence" value="ECO:0000315"/>
    <property type="project" value="RGD"/>
</dbReference>
<dbReference type="FunFam" id="1.20.1440.80:FF:000002">
    <property type="entry name" value="Gap junction protein"/>
    <property type="match status" value="1"/>
</dbReference>
<dbReference type="Gene3D" id="1.20.1440.80">
    <property type="entry name" value="Gap junction channel protein cysteine-rich domain"/>
    <property type="match status" value="1"/>
</dbReference>
<dbReference type="InterPro" id="IPR000500">
    <property type="entry name" value="Connexin"/>
</dbReference>
<dbReference type="InterPro" id="IPR002266">
    <property type="entry name" value="Connexin50"/>
</dbReference>
<dbReference type="InterPro" id="IPR019570">
    <property type="entry name" value="Connexin_CCC"/>
</dbReference>
<dbReference type="InterPro" id="IPR017990">
    <property type="entry name" value="Connexin_CS"/>
</dbReference>
<dbReference type="InterPro" id="IPR013092">
    <property type="entry name" value="Connexin_N"/>
</dbReference>
<dbReference type="InterPro" id="IPR038359">
    <property type="entry name" value="Connexin_N_sf"/>
</dbReference>
<dbReference type="PANTHER" id="PTHR11984">
    <property type="entry name" value="CONNEXIN"/>
    <property type="match status" value="1"/>
</dbReference>
<dbReference type="PANTHER" id="PTHR11984:SF19">
    <property type="entry name" value="GAP JUNCTION ALPHA-8 PROTEIN"/>
    <property type="match status" value="1"/>
</dbReference>
<dbReference type="Pfam" id="PF00029">
    <property type="entry name" value="Connexin"/>
    <property type="match status" value="1"/>
</dbReference>
<dbReference type="Pfam" id="PF03509">
    <property type="entry name" value="Connexin50"/>
    <property type="match status" value="1"/>
</dbReference>
<dbReference type="PRINTS" id="PR00206">
    <property type="entry name" value="CONNEXIN"/>
</dbReference>
<dbReference type="PRINTS" id="PR01137">
    <property type="entry name" value="CONNEXINA8"/>
</dbReference>
<dbReference type="SMART" id="SM00037">
    <property type="entry name" value="CNX"/>
    <property type="match status" value="1"/>
</dbReference>
<dbReference type="SMART" id="SM01089">
    <property type="entry name" value="Connexin_CCC"/>
    <property type="match status" value="1"/>
</dbReference>
<dbReference type="PROSITE" id="PS00407">
    <property type="entry name" value="CONNEXINS_1"/>
    <property type="match status" value="1"/>
</dbReference>
<dbReference type="PROSITE" id="PS00408">
    <property type="entry name" value="CONNEXINS_2"/>
    <property type="match status" value="1"/>
</dbReference>
<comment type="function">
    <text evidence="1">Structural component of eye lens gap junctions. Gap junctions are dodecameric channels that connect the cytoplasm of adjoining cells. They are formed by the docking of two hexameric hemichannels, one from each cell membrane. Small molecules and ions diffuse from one cell to a neighboring cell via the central pore.</text>
</comment>
<comment type="subunit">
    <text evidence="1">A hemichannel or connexon is composed of a hexamer of connexins. A functional gap junction is formed by the apposition of two hemichannels. Forms heteromeric channels with GJA3.</text>
</comment>
<comment type="subcellular location">
    <subcellularLocation>
        <location evidence="1">Cell membrane</location>
        <topology evidence="1">Multi-pass membrane protein</topology>
    </subcellularLocation>
    <subcellularLocation>
        <location evidence="1">Cell junction</location>
        <location evidence="1">Gap junction</location>
    </subcellularLocation>
</comment>
<comment type="tissue specificity">
    <text evidence="4">Detected in eye lens (at protein level).</text>
</comment>
<comment type="disease">
    <text evidence="3">Defects in Gja8 are the cause of cataract.</text>
</comment>
<comment type="similarity">
    <text evidence="5">Belongs to the connexin family. Alpha-type (group II) subfamily.</text>
</comment>